<keyword id="KW-0002">3D-structure</keyword>
<keyword id="KW-0025">Alternative splicing</keyword>
<keyword id="KW-0898">Cataract</keyword>
<keyword id="KW-0225">Disease variant</keyword>
<keyword id="KW-0991">Intellectual disability</keyword>
<keyword id="KW-0488">Methylation</keyword>
<keyword id="KW-0866">Nonsense-mediated mRNA decay</keyword>
<keyword id="KW-0597">Phosphoprotein</keyword>
<keyword id="KW-1267">Proteomics identification</keyword>
<keyword id="KW-1185">Reference proteome</keyword>
<proteinExistence type="evidence at protein level"/>
<sequence length="991" mass="109684">MAGPVSLRDLLMGASAWMGSESPGGSPTEGGGSAAGGPEPPWREDEICVVGIFGKTALRLNSEKFSLVNTVCDRQVFPLFRHQDPGDPGPGIRTEAGAVGEAGGAEDPGAAAGGSVRGSGAVAEGNRTEAGSQDYSLLQAYYSQESKVLYLLLTSICDNSQLLRACRALQSGEAGGGLSLPHAEAHEFWKHQEKLQCLSLLYLFSVCHILLLVHPTCSFDITYDRVFRALDGLRQKVLPLLKTAIKDCPVGKDWKLNCRPCPPRLLFLFQLNGALKVEPPRNQDPAHPDKPKKHSPKRRLQHALEDQIYRIFRKSRVLTNQSINCLFTVPANQAFVYIVPGSQEEDPVGMLLDQLRSHCTVKDPESLLVPAPLSGPRRYQVMRQHSRQQLSFHIDSSSSSSSGQLVDFTLREFLWQHVELVLSKKGFDDSVGRNPQPSHFELPTYQKWISAASKLYEVAIDGKEEDLGSPTGELTSKILSSIKVLEGFLDIDTKFSENRCQKALPMAHSAYQSNLPHNYTMTVHKNQLAQALRVYSQHARGPAFHKYAMQLHEDCYKFWSNGHQLCEERSLTDQHCVHKFHSLPKSGEKPEADRNPPVLYHNSRARSTGACNCGRKQAPRDDPFDIKAANYDFYQLLEEKCCGKLDHINFPVFEPSTPDPAPAKNESSPAPPDSDADKLKEKEPQTQGESTSLSLALSLGQSTDSLGTYPADPQAGGDNPEVHGQVEVKTEKRPNFVDRQASTVEYLPGMLHSNCPKGLLPKFSSWSLVKLGPAKSYNFHTGLDQQGFIPGTNYLMPWDIVIRTRAEDEGDLDTNSWPAPNKAIPGKRSAVVMGRGRRRDDIARAFVGFEYEDSRGRRFMCSGPDKVMKVMGSGPKESALKALNSDMPLYILSSSQGRGLKPHYAQLMRLFVVVPDAPLQIILMPQVQPGPPPCPVFYPEKQEITLPPDGLWVLRFPYAYVTERGPCFPPKENVQLMSYKVLRGVLKAVTQ</sequence>
<gene>
    <name type="primary">SMG8</name>
    <name type="synonym">ABC2</name>
    <name type="synonym">C17orf71</name>
</gene>
<evidence type="ECO:0000256" key="1">
    <source>
        <dbReference type="SAM" id="MobiDB-lite"/>
    </source>
</evidence>
<evidence type="ECO:0000269" key="2">
    <source>
    </source>
</evidence>
<evidence type="ECO:0000269" key="3">
    <source>
    </source>
</evidence>
<evidence type="ECO:0000269" key="4">
    <source>
    </source>
</evidence>
<evidence type="ECO:0000269" key="5">
    <source>
    </source>
</evidence>
<evidence type="ECO:0000303" key="6">
    <source>
    </source>
</evidence>
<evidence type="ECO:0000303" key="7">
    <source ref="1"/>
</evidence>
<evidence type="ECO:0000305" key="8"/>
<evidence type="ECO:0000312" key="9">
    <source>
        <dbReference type="HGNC" id="HGNC:25551"/>
    </source>
</evidence>
<evidence type="ECO:0007744" key="10">
    <source>
    </source>
</evidence>
<evidence type="ECO:0007744" key="11">
    <source>
    </source>
</evidence>
<evidence type="ECO:0007744" key="12">
    <source>
    </source>
</evidence>
<evidence type="ECO:0007744" key="13">
    <source>
    </source>
</evidence>
<evidence type="ECO:0007829" key="14">
    <source>
        <dbReference type="PDB" id="6L54"/>
    </source>
</evidence>
<evidence type="ECO:0007829" key="15">
    <source>
        <dbReference type="PDB" id="6SYT"/>
    </source>
</evidence>
<evidence type="ECO:0007829" key="16">
    <source>
        <dbReference type="PDB" id="6Z3R"/>
    </source>
</evidence>
<evidence type="ECO:0007829" key="17">
    <source>
        <dbReference type="PDB" id="7PW5"/>
    </source>
</evidence>
<evidence type="ECO:0007829" key="18">
    <source>
        <dbReference type="PDB" id="7PW8"/>
    </source>
</evidence>
<feature type="chain" id="PRO_0000304974" description="Nonsense-mediated mRNA decay factor SMG8">
    <location>
        <begin position="1"/>
        <end position="991"/>
    </location>
</feature>
<feature type="region of interest" description="Disordered" evidence="1">
    <location>
        <begin position="16"/>
        <end position="41"/>
    </location>
</feature>
<feature type="region of interest" description="Disordered" evidence="1">
    <location>
        <begin position="82"/>
        <end position="127"/>
    </location>
</feature>
<feature type="region of interest" description="Disordered" evidence="1">
    <location>
        <begin position="279"/>
        <end position="299"/>
    </location>
</feature>
<feature type="region of interest" description="Disordered" evidence="1">
    <location>
        <begin position="653"/>
        <end position="722"/>
    </location>
</feature>
<feature type="compositionally biased region" description="Low complexity" evidence="1">
    <location>
        <begin position="95"/>
        <end position="110"/>
    </location>
</feature>
<feature type="compositionally biased region" description="Basic and acidic residues" evidence="1">
    <location>
        <begin position="279"/>
        <end position="289"/>
    </location>
</feature>
<feature type="compositionally biased region" description="Basic residues" evidence="1">
    <location>
        <begin position="290"/>
        <end position="299"/>
    </location>
</feature>
<feature type="compositionally biased region" description="Basic and acidic residues" evidence="1">
    <location>
        <begin position="675"/>
        <end position="684"/>
    </location>
</feature>
<feature type="compositionally biased region" description="Polar residues" evidence="1">
    <location>
        <begin position="685"/>
        <end position="706"/>
    </location>
</feature>
<feature type="modified residue" description="Phosphoserine" evidence="12">
    <location>
        <position position="115"/>
    </location>
</feature>
<feature type="modified residue" description="Phosphoserine" evidence="10">
    <location>
        <position position="469"/>
    </location>
</feature>
<feature type="modified residue" description="Phosphoserine" evidence="11 12">
    <location>
        <position position="668"/>
    </location>
</feature>
<feature type="modified residue" description="Phosphoserine" evidence="12">
    <location>
        <position position="742"/>
    </location>
</feature>
<feature type="modified residue" description="Phosphoserine" evidence="12">
    <location>
        <position position="895"/>
    </location>
</feature>
<feature type="modified residue" description="Omega-N-methylarginine" evidence="13">
    <location>
        <position position="898"/>
    </location>
</feature>
<feature type="splice variant" id="VSP_028164" description="In isoform 3." evidence="6">
    <original>E</original>
    <variation>S</variation>
    <location>
        <position position="588"/>
    </location>
</feature>
<feature type="splice variant" id="VSP_028165" description="In isoform 3." evidence="6">
    <location>
        <begin position="589"/>
        <end position="991"/>
    </location>
</feature>
<feature type="splice variant" id="VSP_028166" description="In isoform 2." evidence="7">
    <original>T</original>
    <variation>TLPPDGLWVLRFPYAYGLREDLVSPXGKKQEIP</variation>
    <location>
        <position position="945"/>
    </location>
</feature>
<feature type="sequence variant" id="VAR_085550" description="In ALKUS." evidence="5">
    <original>H</original>
    <variation>R</variation>
    <location>
        <position position="208"/>
    </location>
</feature>
<feature type="sequence variant" id="VAR_035137" description="In dbSNP:rs8068240.">
    <original>P</original>
    <variation>L</variation>
    <location>
        <position position="280"/>
    </location>
</feature>
<feature type="sequence variant" id="VAR_085551" description="In ALKUS." evidence="5">
    <location>
        <begin position="839"/>
        <end position="991"/>
    </location>
</feature>
<feature type="sequence conflict" description="In Ref. 2; BAB15576." evidence="8" ref="2">
    <original>E</original>
    <variation>V</variation>
    <location>
        <position position="278"/>
    </location>
</feature>
<feature type="sequence conflict" description="In Ref. 2; BAB15576." evidence="8" ref="2">
    <original>R</original>
    <variation>W</variation>
    <location>
        <position position="411"/>
    </location>
</feature>
<feature type="sequence conflict" description="In Ref. 1; AAL83913." evidence="8" ref="1">
    <original>F</original>
    <variation>L</variation>
    <location>
        <position position="488"/>
    </location>
</feature>
<feature type="sequence conflict" description="In Ref. 1; AAL83913." evidence="8" ref="1">
    <original>I</original>
    <variation>F</variation>
    <location>
        <position position="491"/>
    </location>
</feature>
<feature type="sequence conflict" description="In Ref. 1; AAL83913." evidence="8" ref="1">
    <original>T</original>
    <variation>P</variation>
    <location>
        <position position="493"/>
    </location>
</feature>
<feature type="sequence conflict" description="In Ref. 1; AAL83913." evidence="8" ref="1">
    <original>T</original>
    <variation>P</variation>
    <location>
        <position position="520"/>
    </location>
</feature>
<feature type="sequence conflict" description="In Ref. 1; AAL83913." evidence="8" ref="1">
    <original>T</original>
    <variation>P</variation>
    <location>
        <position position="522"/>
    </location>
</feature>
<feature type="sequence conflict" description="In Ref. 1; AAL83913." evidence="8" ref="1">
    <original>L</original>
    <variation>R</variation>
    <location>
        <position position="532"/>
    </location>
</feature>
<feature type="helix" evidence="18">
    <location>
        <begin position="7"/>
        <end position="11"/>
    </location>
</feature>
<feature type="helix" evidence="18">
    <location>
        <begin position="40"/>
        <end position="42"/>
    </location>
</feature>
<feature type="strand" evidence="18">
    <location>
        <begin position="48"/>
        <end position="54"/>
    </location>
</feature>
<feature type="strand" evidence="16">
    <location>
        <begin position="58"/>
        <end position="61"/>
    </location>
</feature>
<feature type="helix" evidence="18">
    <location>
        <begin position="63"/>
        <end position="71"/>
    </location>
</feature>
<feature type="strand" evidence="16">
    <location>
        <begin position="72"/>
        <end position="74"/>
    </location>
</feature>
<feature type="strand" evidence="18">
    <location>
        <begin position="137"/>
        <end position="143"/>
    </location>
</feature>
<feature type="turn" evidence="18">
    <location>
        <begin position="144"/>
        <end position="147"/>
    </location>
</feature>
<feature type="strand" evidence="18">
    <location>
        <begin position="148"/>
        <end position="154"/>
    </location>
</feature>
<feature type="helix" evidence="18">
    <location>
        <begin position="159"/>
        <end position="171"/>
    </location>
</feature>
<feature type="helix" evidence="18">
    <location>
        <begin position="182"/>
        <end position="203"/>
    </location>
</feature>
<feature type="strand" evidence="18">
    <location>
        <begin position="208"/>
        <end position="218"/>
    </location>
</feature>
<feature type="helix" evidence="18">
    <location>
        <begin position="222"/>
        <end position="234"/>
    </location>
</feature>
<feature type="helix" evidence="18">
    <location>
        <begin position="238"/>
        <end position="244"/>
    </location>
</feature>
<feature type="strand" evidence="18">
    <location>
        <begin position="246"/>
        <end position="248"/>
    </location>
</feature>
<feature type="helix" evidence="18">
    <location>
        <begin position="252"/>
        <end position="257"/>
    </location>
</feature>
<feature type="strand" evidence="18">
    <location>
        <begin position="258"/>
        <end position="261"/>
    </location>
</feature>
<feature type="strand" evidence="18">
    <location>
        <begin position="264"/>
        <end position="270"/>
    </location>
</feature>
<feature type="helix" evidence="18">
    <location>
        <begin position="296"/>
        <end position="314"/>
    </location>
</feature>
<feature type="turn" evidence="18">
    <location>
        <begin position="322"/>
        <end position="324"/>
    </location>
</feature>
<feature type="strand" evidence="15">
    <location>
        <begin position="325"/>
        <end position="328"/>
    </location>
</feature>
<feature type="strand" evidence="18">
    <location>
        <begin position="331"/>
        <end position="333"/>
    </location>
</feature>
<feature type="strand" evidence="18">
    <location>
        <begin position="336"/>
        <end position="339"/>
    </location>
</feature>
<feature type="strand" evidence="18">
    <location>
        <begin position="343"/>
        <end position="345"/>
    </location>
</feature>
<feature type="helix" evidence="18">
    <location>
        <begin position="347"/>
        <end position="358"/>
    </location>
</feature>
<feature type="helix" evidence="18">
    <location>
        <begin position="410"/>
        <end position="422"/>
    </location>
</feature>
<feature type="strand" evidence="18">
    <location>
        <begin position="432"/>
        <end position="434"/>
    </location>
</feature>
<feature type="helix" evidence="18">
    <location>
        <begin position="445"/>
        <end position="457"/>
    </location>
</feature>
<feature type="helix" evidence="18">
    <location>
        <begin position="478"/>
        <end position="482"/>
    </location>
</feature>
<feature type="helix" evidence="14">
    <location>
        <begin position="483"/>
        <end position="485"/>
    </location>
</feature>
<feature type="helix" evidence="18">
    <location>
        <begin position="489"/>
        <end position="508"/>
    </location>
</feature>
<feature type="helix" evidence="18">
    <location>
        <begin position="524"/>
        <end position="538"/>
    </location>
</feature>
<feature type="helix" evidence="18">
    <location>
        <begin position="544"/>
        <end position="557"/>
    </location>
</feature>
<feature type="strand" evidence="17">
    <location>
        <begin position="578"/>
        <end position="580"/>
    </location>
</feature>
<feature type="strand" evidence="17">
    <location>
        <begin position="594"/>
        <end position="596"/>
    </location>
</feature>
<feature type="strand" evidence="17">
    <location>
        <begin position="606"/>
        <end position="610"/>
    </location>
</feature>
<feature type="strand" evidence="17">
    <location>
        <begin position="617"/>
        <end position="621"/>
    </location>
</feature>
<feature type="helix" evidence="17">
    <location>
        <begin position="626"/>
        <end position="630"/>
    </location>
</feature>
<feature type="helix" evidence="17">
    <location>
        <begin position="632"/>
        <end position="638"/>
    </location>
</feature>
<feature type="turn" evidence="17">
    <location>
        <begin position="639"/>
        <end position="644"/>
    </location>
</feature>
<feature type="strand" evidence="17">
    <location>
        <begin position="645"/>
        <end position="648"/>
    </location>
</feature>
<feature type="strand" evidence="17">
    <location>
        <begin position="656"/>
        <end position="659"/>
    </location>
</feature>
<feature type="strand" evidence="17">
    <location>
        <begin position="743"/>
        <end position="749"/>
    </location>
</feature>
<feature type="strand" evidence="17">
    <location>
        <begin position="761"/>
        <end position="763"/>
    </location>
</feature>
<feature type="strand" evidence="17">
    <location>
        <begin position="767"/>
        <end position="772"/>
    </location>
</feature>
<feature type="helix" evidence="17">
    <location>
        <begin position="774"/>
        <end position="776"/>
    </location>
</feature>
<feature type="turn" evidence="17">
    <location>
        <begin position="779"/>
        <end position="781"/>
    </location>
</feature>
<feature type="strand" evidence="17">
    <location>
        <begin position="796"/>
        <end position="801"/>
    </location>
</feature>
<feature type="helix" evidence="17">
    <location>
        <begin position="839"/>
        <end position="841"/>
    </location>
</feature>
<feature type="strand" evidence="17">
    <location>
        <begin position="842"/>
        <end position="853"/>
    </location>
</feature>
<feature type="strand" evidence="17">
    <location>
        <begin position="858"/>
        <end position="863"/>
    </location>
</feature>
<feature type="strand" evidence="17">
    <location>
        <begin position="872"/>
        <end position="874"/>
    </location>
</feature>
<feature type="helix" evidence="17">
    <location>
        <begin position="879"/>
        <end position="883"/>
    </location>
</feature>
<feature type="strand" evidence="17">
    <location>
        <begin position="887"/>
        <end position="892"/>
    </location>
</feature>
<feature type="strand" evidence="17">
    <location>
        <begin position="898"/>
        <end position="901"/>
    </location>
</feature>
<feature type="strand" evidence="17">
    <location>
        <begin position="904"/>
        <end position="914"/>
    </location>
</feature>
<feature type="strand" evidence="17">
    <location>
        <begin position="916"/>
        <end position="923"/>
    </location>
</feature>
<feature type="strand" evidence="17">
    <location>
        <begin position="927"/>
        <end position="931"/>
    </location>
</feature>
<feature type="strand" evidence="17">
    <location>
        <begin position="940"/>
        <end position="942"/>
    </location>
</feature>
<feature type="strand" evidence="17">
    <location>
        <begin position="944"/>
        <end position="946"/>
    </location>
</feature>
<feature type="strand" evidence="17">
    <location>
        <begin position="948"/>
        <end position="955"/>
    </location>
</feature>
<feature type="strand" evidence="17">
    <location>
        <begin position="958"/>
        <end position="962"/>
    </location>
</feature>
<feature type="strand" evidence="17">
    <location>
        <begin position="965"/>
        <end position="967"/>
    </location>
</feature>
<feature type="helix" evidence="17">
    <location>
        <begin position="976"/>
        <end position="978"/>
    </location>
</feature>
<feature type="strand" evidence="17">
    <location>
        <begin position="979"/>
        <end position="981"/>
    </location>
</feature>
<feature type="strand" evidence="17">
    <location>
        <begin position="985"/>
        <end position="990"/>
    </location>
</feature>
<dbReference type="EMBL" id="AF349467">
    <property type="protein sequence ID" value="AAL83913.1"/>
    <property type="molecule type" value="mRNA"/>
</dbReference>
<dbReference type="EMBL" id="AK001449">
    <property type="protein sequence ID" value="BAA91699.1"/>
    <property type="status" value="ALT_INIT"/>
    <property type="molecule type" value="mRNA"/>
</dbReference>
<dbReference type="EMBL" id="AK026858">
    <property type="protein sequence ID" value="BAB15576.1"/>
    <property type="molecule type" value="mRNA"/>
</dbReference>
<dbReference type="EMBL" id="AL834490">
    <property type="protein sequence ID" value="CAD39148.1"/>
    <property type="molecule type" value="mRNA"/>
</dbReference>
<dbReference type="EMBL" id="AC099850">
    <property type="status" value="NOT_ANNOTATED_CDS"/>
    <property type="molecule type" value="Genomic_DNA"/>
</dbReference>
<dbReference type="EMBL" id="CH471109">
    <property type="protein sequence ID" value="EAW94415.1"/>
    <property type="molecule type" value="Genomic_DNA"/>
</dbReference>
<dbReference type="EMBL" id="BC020957">
    <property type="protein sequence ID" value="AAH20957.1"/>
    <property type="status" value="ALT_INIT"/>
    <property type="molecule type" value="mRNA"/>
</dbReference>
<dbReference type="EMBL" id="BC031604">
    <property type="protein sequence ID" value="AAH31604.1"/>
    <property type="molecule type" value="mRNA"/>
</dbReference>
<dbReference type="CCDS" id="CCDS11615.1">
    <molecule id="Q8ND04-1"/>
</dbReference>
<dbReference type="RefSeq" id="NP_060619.4">
    <molecule id="Q8ND04-1"/>
    <property type="nucleotide sequence ID" value="NM_018149.6"/>
</dbReference>
<dbReference type="PDB" id="6L54">
    <property type="method" value="EM"/>
    <property type="resolution" value="3.43 A"/>
    <property type="chains" value="B=1-991"/>
</dbReference>
<dbReference type="PDB" id="6SYT">
    <property type="method" value="EM"/>
    <property type="resolution" value="3.45 A"/>
    <property type="chains" value="B=1-991"/>
</dbReference>
<dbReference type="PDB" id="6Z3R">
    <property type="method" value="EM"/>
    <property type="resolution" value="2.97 A"/>
    <property type="chains" value="B=1-991"/>
</dbReference>
<dbReference type="PDB" id="7PW4">
    <property type="method" value="EM"/>
    <property type="resolution" value="3.27 A"/>
    <property type="chains" value="B=1-991"/>
</dbReference>
<dbReference type="PDB" id="7PW5">
    <property type="method" value="EM"/>
    <property type="resolution" value="3.40 A"/>
    <property type="chains" value="B=1-991"/>
</dbReference>
<dbReference type="PDB" id="7PW8">
    <property type="method" value="EM"/>
    <property type="resolution" value="2.82 A"/>
    <property type="chains" value="B=1-991"/>
</dbReference>
<dbReference type="PDBsum" id="6L54"/>
<dbReference type="PDBsum" id="6SYT"/>
<dbReference type="PDBsum" id="6Z3R"/>
<dbReference type="PDBsum" id="7PW4"/>
<dbReference type="PDBsum" id="7PW5"/>
<dbReference type="PDBsum" id="7PW8"/>
<dbReference type="EMDB" id="EMD-0837"/>
<dbReference type="EMDB" id="EMD-10347"/>
<dbReference type="EMDB" id="EMD-11063"/>
<dbReference type="EMDB" id="EMD-13674"/>
<dbReference type="EMDB" id="EMD-13675"/>
<dbReference type="EMDB" id="EMD-13678"/>
<dbReference type="EMDB" id="EMD-2663"/>
<dbReference type="EMDB" id="EMD-2664"/>
<dbReference type="EMDB" id="EMD-2665"/>
<dbReference type="EMDB" id="EMD-2666"/>
<dbReference type="EMDB" id="EMD-3065"/>
<dbReference type="EMDB" id="EMD-3066"/>
<dbReference type="EMDB" id="EMD-3278"/>
<dbReference type="SMR" id="Q8ND04"/>
<dbReference type="BioGRID" id="120480">
    <property type="interactions" value="132"/>
</dbReference>
<dbReference type="ComplexPortal" id="CPX-2827">
    <property type="entry name" value="SMG1C protein kinase complex"/>
</dbReference>
<dbReference type="CORUM" id="Q8ND04"/>
<dbReference type="FunCoup" id="Q8ND04">
    <property type="interactions" value="1672"/>
</dbReference>
<dbReference type="IntAct" id="Q8ND04">
    <property type="interactions" value="73"/>
</dbReference>
<dbReference type="STRING" id="9606.ENSP00000438748"/>
<dbReference type="GlyGen" id="Q8ND04">
    <property type="glycosylation" value="1 site, 1 O-linked glycan (1 site)"/>
</dbReference>
<dbReference type="iPTMnet" id="Q8ND04"/>
<dbReference type="PhosphoSitePlus" id="Q8ND04"/>
<dbReference type="BioMuta" id="SMG8"/>
<dbReference type="DMDM" id="74715258"/>
<dbReference type="jPOST" id="Q8ND04"/>
<dbReference type="MassIVE" id="Q8ND04"/>
<dbReference type="PaxDb" id="9606-ENSP00000438748"/>
<dbReference type="PeptideAtlas" id="Q8ND04"/>
<dbReference type="ProteomicsDB" id="72968">
    <molecule id="Q8ND04-1"/>
</dbReference>
<dbReference type="ProteomicsDB" id="72969">
    <molecule id="Q8ND04-2"/>
</dbReference>
<dbReference type="ProteomicsDB" id="72970">
    <molecule id="Q8ND04-3"/>
</dbReference>
<dbReference type="Pumba" id="Q8ND04"/>
<dbReference type="Antibodypedia" id="31075">
    <property type="antibodies" value="53 antibodies from 18 providers"/>
</dbReference>
<dbReference type="DNASU" id="55181"/>
<dbReference type="Ensembl" id="ENST00000300917.10">
    <molecule id="Q8ND04-1"/>
    <property type="protein sequence ID" value="ENSP00000300917.4"/>
    <property type="gene ID" value="ENSG00000167447.13"/>
</dbReference>
<dbReference type="Ensembl" id="ENST00000543872.6">
    <molecule id="Q8ND04-1"/>
    <property type="protein sequence ID" value="ENSP00000438748.2"/>
    <property type="gene ID" value="ENSG00000167447.13"/>
</dbReference>
<dbReference type="Ensembl" id="ENST00000578922.1">
    <molecule id="Q8ND04-3"/>
    <property type="protein sequence ID" value="ENSP00000462119.1"/>
    <property type="gene ID" value="ENSG00000167447.13"/>
</dbReference>
<dbReference type="GeneID" id="55181"/>
<dbReference type="KEGG" id="hsa:55181"/>
<dbReference type="MANE-Select" id="ENST00000300917.10">
    <property type="protein sequence ID" value="ENSP00000300917.4"/>
    <property type="RefSeq nucleotide sequence ID" value="NM_018149.7"/>
    <property type="RefSeq protein sequence ID" value="NP_060619.4"/>
</dbReference>
<dbReference type="UCSC" id="uc002ixi.4">
    <molecule id="Q8ND04-1"/>
    <property type="organism name" value="human"/>
</dbReference>
<dbReference type="AGR" id="HGNC:25551"/>
<dbReference type="CTD" id="55181"/>
<dbReference type="DisGeNET" id="55181"/>
<dbReference type="GeneCards" id="SMG8"/>
<dbReference type="HGNC" id="HGNC:25551">
    <property type="gene designation" value="SMG8"/>
</dbReference>
<dbReference type="HPA" id="ENSG00000167447">
    <property type="expression patterns" value="Low tissue specificity"/>
</dbReference>
<dbReference type="MalaCards" id="SMG8"/>
<dbReference type="MIM" id="613175">
    <property type="type" value="gene"/>
</dbReference>
<dbReference type="MIM" id="619268">
    <property type="type" value="phenotype"/>
</dbReference>
<dbReference type="neXtProt" id="NX_Q8ND04"/>
<dbReference type="OpenTargets" id="ENSG00000167447"/>
<dbReference type="PharmGKB" id="PA142672219"/>
<dbReference type="VEuPathDB" id="HostDB:ENSG00000167447"/>
<dbReference type="eggNOG" id="KOG3692">
    <property type="taxonomic scope" value="Eukaryota"/>
</dbReference>
<dbReference type="GeneTree" id="ENSGT00390000018533"/>
<dbReference type="HOGENOM" id="CLU_008116_0_0_1"/>
<dbReference type="InParanoid" id="Q8ND04"/>
<dbReference type="OMA" id="MHSGCPK"/>
<dbReference type="OrthoDB" id="63589at2759"/>
<dbReference type="PAN-GO" id="Q8ND04">
    <property type="GO annotations" value="1 GO annotation based on evolutionary models"/>
</dbReference>
<dbReference type="PhylomeDB" id="Q8ND04"/>
<dbReference type="TreeFam" id="TF323445"/>
<dbReference type="PathwayCommons" id="Q8ND04"/>
<dbReference type="Reactome" id="R-HSA-975957">
    <property type="pathway name" value="Nonsense Mediated Decay (NMD) enhanced by the Exon Junction Complex (EJC)"/>
</dbReference>
<dbReference type="SignaLink" id="Q8ND04"/>
<dbReference type="BioGRID-ORCS" id="55181">
    <property type="hits" value="86 hits in 1166 CRISPR screens"/>
</dbReference>
<dbReference type="ChiTaRS" id="SMG8">
    <property type="organism name" value="human"/>
</dbReference>
<dbReference type="GenomeRNAi" id="55181"/>
<dbReference type="Pharos" id="Q8ND04">
    <property type="development level" value="Tdark"/>
</dbReference>
<dbReference type="PRO" id="PR:Q8ND04"/>
<dbReference type="Proteomes" id="UP000005640">
    <property type="component" value="Chromosome 17"/>
</dbReference>
<dbReference type="RNAct" id="Q8ND04">
    <property type="molecule type" value="protein"/>
</dbReference>
<dbReference type="Bgee" id="ENSG00000167447">
    <property type="expression patterns" value="Expressed in secondary oocyte and 193 other cell types or tissues"/>
</dbReference>
<dbReference type="ExpressionAtlas" id="Q8ND04">
    <property type="expression patterns" value="baseline and differential"/>
</dbReference>
<dbReference type="GO" id="GO:0005829">
    <property type="term" value="C:cytosol"/>
    <property type="evidence" value="ECO:0000304"/>
    <property type="project" value="Reactome"/>
</dbReference>
<dbReference type="GO" id="GO:0000184">
    <property type="term" value="P:nuclear-transcribed mRNA catabolic process, nonsense-mediated decay"/>
    <property type="evidence" value="ECO:0000315"/>
    <property type="project" value="UniProtKB"/>
</dbReference>
<dbReference type="GO" id="GO:0045859">
    <property type="term" value="P:regulation of protein kinase activity"/>
    <property type="evidence" value="ECO:0000315"/>
    <property type="project" value="UniProtKB"/>
</dbReference>
<dbReference type="InterPro" id="IPR019354">
    <property type="entry name" value="SMG8-like"/>
</dbReference>
<dbReference type="PANTHER" id="PTHR13091">
    <property type="entry name" value="AMPLIFIED IN BREAST CANCER 2-RELATED"/>
    <property type="match status" value="1"/>
</dbReference>
<dbReference type="PANTHER" id="PTHR13091:SF0">
    <property type="entry name" value="NONSENSE-MEDIATED MRNA DECAY FACTOR SMG8"/>
    <property type="match status" value="1"/>
</dbReference>
<dbReference type="Pfam" id="PF10220">
    <property type="entry name" value="Smg8_Smg9"/>
    <property type="match status" value="1"/>
</dbReference>
<organism>
    <name type="scientific">Homo sapiens</name>
    <name type="common">Human</name>
    <dbReference type="NCBI Taxonomy" id="9606"/>
    <lineage>
        <taxon>Eukaryota</taxon>
        <taxon>Metazoa</taxon>
        <taxon>Chordata</taxon>
        <taxon>Craniata</taxon>
        <taxon>Vertebrata</taxon>
        <taxon>Euteleostomi</taxon>
        <taxon>Mammalia</taxon>
        <taxon>Eutheria</taxon>
        <taxon>Euarchontoglires</taxon>
        <taxon>Primates</taxon>
        <taxon>Haplorrhini</taxon>
        <taxon>Catarrhini</taxon>
        <taxon>Hominidae</taxon>
        <taxon>Homo</taxon>
    </lineage>
</organism>
<name>SMG8_HUMAN</name>
<protein>
    <recommendedName>
        <fullName evidence="9">Nonsense-mediated mRNA decay factor SMG8</fullName>
    </recommendedName>
    <alternativeName>
        <fullName evidence="7">Amplified in breast cancer gene 2 protein</fullName>
    </alternativeName>
    <alternativeName>
        <fullName>Protein smg-8 homolog</fullName>
    </alternativeName>
</protein>
<comment type="function">
    <text evidence="2">Involved in nonsense-mediated decay (NMD) of mRNAs containing premature stop codons. Is recruited by release factors to stalled ribosomes together with SMG1 and SMG9 (forming the SMG1C protein kinase complex) and, in the SMG1C complex, is required to mediate the recruitment of SMG1 to the ribosome:SURF complex and to suppress SMG1 kinase activity until the ribosome:SURF complex locates the exon junction complex (EJC). Acts as a regulator of kinase activity.</text>
</comment>
<comment type="subunit">
    <text evidence="2 3 4">Component of the SMG1C complex composed of SMG1, SMG8 and SMG9; the recruitment of SMG8 to SMG1 N-terminus induces a large conformational change in the SMG1 C-terminal head domain containing the catalytic domain (PubMed:33205750). Forms heterodimers with SMG9; this assembly form may represent a SMG1C intermediate form.</text>
</comment>
<comment type="interaction">
    <interactant intactId="EBI-3903643">
        <id>Q8ND04</id>
    </interactant>
    <interactant intactId="EBI-2872322">
        <id>Q9H0W8</id>
        <label>SMG9</label>
    </interactant>
    <organismsDiffer>false</organismsDiffer>
    <experiments>6</experiments>
</comment>
<comment type="alternative products">
    <event type="alternative splicing"/>
    <isoform>
        <id>Q8ND04-1</id>
        <name>1</name>
        <sequence type="displayed"/>
    </isoform>
    <isoform>
        <id>Q8ND04-2</id>
        <name>2</name>
        <name>ABC2</name>
        <sequence type="described" ref="VSP_028166"/>
    </isoform>
    <isoform>
        <id>Q8ND04-3</id>
        <name>3</name>
        <sequence type="described" ref="VSP_028164 VSP_028165"/>
    </isoform>
</comment>
<comment type="PTM">
    <text evidence="2">Phosphorylated by SMG1.</text>
</comment>
<comment type="disease" evidence="5">
    <disease id="DI-06078">
        <name>Alzahrani-Kuwahara syndrome</name>
        <acronym>ALKUS</acronym>
        <description>An autosomal recessive disorder characterized by severe global developmental delay, impaired intellectual function, poor or absent speech, microcephaly, and facial dysmorphism. Additional variable features include early-onset cataracts, hypotonia, lower limb spasticity, and congenital heart malformations.</description>
        <dbReference type="MIM" id="619268"/>
    </disease>
    <text>The disease is caused by variants affecting the gene represented in this entry.</text>
</comment>
<comment type="similarity">
    <text evidence="8">Belongs to the SMG8 family.</text>
</comment>
<comment type="sequence caution" evidence="8">
    <conflict type="erroneous initiation">
        <sequence resource="EMBL-CDS" id="AAH20957"/>
    </conflict>
    <text>Truncated N-terminus.</text>
</comment>
<comment type="sequence caution" evidence="8">
    <conflict type="erroneous initiation">
        <sequence resource="EMBL-CDS" id="BAA91699"/>
    </conflict>
    <text>Truncated N-terminus.</text>
</comment>
<reference key="1">
    <citation type="submission" date="2001-02" db="EMBL/GenBank/DDBJ databases">
        <title>Cloning and characterization of three novel amplified and overexpressed genes from breast cancer.</title>
        <authorList>
            <person name="Wu G.G."/>
            <person name="Couch F.J."/>
        </authorList>
    </citation>
    <scope>NUCLEOTIDE SEQUENCE [MRNA] (ISOFORM 2)</scope>
</reference>
<reference key="2">
    <citation type="journal article" date="2004" name="Nat. Genet.">
        <title>Complete sequencing and characterization of 21,243 full-length human cDNAs.</title>
        <authorList>
            <person name="Ota T."/>
            <person name="Suzuki Y."/>
            <person name="Nishikawa T."/>
            <person name="Otsuki T."/>
            <person name="Sugiyama T."/>
            <person name="Irie R."/>
            <person name="Wakamatsu A."/>
            <person name="Hayashi K."/>
            <person name="Sato H."/>
            <person name="Nagai K."/>
            <person name="Kimura K."/>
            <person name="Makita H."/>
            <person name="Sekine M."/>
            <person name="Obayashi M."/>
            <person name="Nishi T."/>
            <person name="Shibahara T."/>
            <person name="Tanaka T."/>
            <person name="Ishii S."/>
            <person name="Yamamoto J."/>
            <person name="Saito K."/>
            <person name="Kawai Y."/>
            <person name="Isono Y."/>
            <person name="Nakamura Y."/>
            <person name="Nagahari K."/>
            <person name="Murakami K."/>
            <person name="Yasuda T."/>
            <person name="Iwayanagi T."/>
            <person name="Wagatsuma M."/>
            <person name="Shiratori A."/>
            <person name="Sudo H."/>
            <person name="Hosoiri T."/>
            <person name="Kaku Y."/>
            <person name="Kodaira H."/>
            <person name="Kondo H."/>
            <person name="Sugawara M."/>
            <person name="Takahashi M."/>
            <person name="Kanda K."/>
            <person name="Yokoi T."/>
            <person name="Furuya T."/>
            <person name="Kikkawa E."/>
            <person name="Omura Y."/>
            <person name="Abe K."/>
            <person name="Kamihara K."/>
            <person name="Katsuta N."/>
            <person name="Sato K."/>
            <person name="Tanikawa M."/>
            <person name="Yamazaki M."/>
            <person name="Ninomiya K."/>
            <person name="Ishibashi T."/>
            <person name="Yamashita H."/>
            <person name="Murakawa K."/>
            <person name="Fujimori K."/>
            <person name="Tanai H."/>
            <person name="Kimata M."/>
            <person name="Watanabe M."/>
            <person name="Hiraoka S."/>
            <person name="Chiba Y."/>
            <person name="Ishida S."/>
            <person name="Ono Y."/>
            <person name="Takiguchi S."/>
            <person name="Watanabe S."/>
            <person name="Yosida M."/>
            <person name="Hotuta T."/>
            <person name="Kusano J."/>
            <person name="Kanehori K."/>
            <person name="Takahashi-Fujii A."/>
            <person name="Hara H."/>
            <person name="Tanase T.-O."/>
            <person name="Nomura Y."/>
            <person name="Togiya S."/>
            <person name="Komai F."/>
            <person name="Hara R."/>
            <person name="Takeuchi K."/>
            <person name="Arita M."/>
            <person name="Imose N."/>
            <person name="Musashino K."/>
            <person name="Yuuki H."/>
            <person name="Oshima A."/>
            <person name="Sasaki N."/>
            <person name="Aotsuka S."/>
            <person name="Yoshikawa Y."/>
            <person name="Matsunawa H."/>
            <person name="Ichihara T."/>
            <person name="Shiohata N."/>
            <person name="Sano S."/>
            <person name="Moriya S."/>
            <person name="Momiyama H."/>
            <person name="Satoh N."/>
            <person name="Takami S."/>
            <person name="Terashima Y."/>
            <person name="Suzuki O."/>
            <person name="Nakagawa S."/>
            <person name="Senoh A."/>
            <person name="Mizoguchi H."/>
            <person name="Goto Y."/>
            <person name="Shimizu F."/>
            <person name="Wakebe H."/>
            <person name="Hishigaki H."/>
            <person name="Watanabe T."/>
            <person name="Sugiyama A."/>
            <person name="Takemoto M."/>
            <person name="Kawakami B."/>
            <person name="Yamazaki M."/>
            <person name="Watanabe K."/>
            <person name="Kumagai A."/>
            <person name="Itakura S."/>
            <person name="Fukuzumi Y."/>
            <person name="Fujimori Y."/>
            <person name="Komiyama M."/>
            <person name="Tashiro H."/>
            <person name="Tanigami A."/>
            <person name="Fujiwara T."/>
            <person name="Ono T."/>
            <person name="Yamada K."/>
            <person name="Fujii Y."/>
            <person name="Ozaki K."/>
            <person name="Hirao M."/>
            <person name="Ohmori Y."/>
            <person name="Kawabata A."/>
            <person name="Hikiji T."/>
            <person name="Kobatake N."/>
            <person name="Inagaki H."/>
            <person name="Ikema Y."/>
            <person name="Okamoto S."/>
            <person name="Okitani R."/>
            <person name="Kawakami T."/>
            <person name="Noguchi S."/>
            <person name="Itoh T."/>
            <person name="Shigeta K."/>
            <person name="Senba T."/>
            <person name="Matsumura K."/>
            <person name="Nakajima Y."/>
            <person name="Mizuno T."/>
            <person name="Morinaga M."/>
            <person name="Sasaki M."/>
            <person name="Togashi T."/>
            <person name="Oyama M."/>
            <person name="Hata H."/>
            <person name="Watanabe M."/>
            <person name="Komatsu T."/>
            <person name="Mizushima-Sugano J."/>
            <person name="Satoh T."/>
            <person name="Shirai Y."/>
            <person name="Takahashi Y."/>
            <person name="Nakagawa K."/>
            <person name="Okumura K."/>
            <person name="Nagase T."/>
            <person name="Nomura N."/>
            <person name="Kikuchi H."/>
            <person name="Masuho Y."/>
            <person name="Yamashita R."/>
            <person name="Nakai K."/>
            <person name="Yada T."/>
            <person name="Nakamura Y."/>
            <person name="Ohara O."/>
            <person name="Isogai T."/>
            <person name="Sugano S."/>
        </authorList>
    </citation>
    <scope>NUCLEOTIDE SEQUENCE [LARGE SCALE MRNA] (ISOFORM 1)</scope>
    <source>
        <tissue>Adipose tissue</tissue>
    </source>
</reference>
<reference key="3">
    <citation type="journal article" date="2007" name="BMC Genomics">
        <title>The full-ORF clone resource of the German cDNA consortium.</title>
        <authorList>
            <person name="Bechtel S."/>
            <person name="Rosenfelder H."/>
            <person name="Duda A."/>
            <person name="Schmidt C.P."/>
            <person name="Ernst U."/>
            <person name="Wellenreuther R."/>
            <person name="Mehrle A."/>
            <person name="Schuster C."/>
            <person name="Bahr A."/>
            <person name="Bloecker H."/>
            <person name="Heubner D."/>
            <person name="Hoerlein A."/>
            <person name="Michel G."/>
            <person name="Wedler H."/>
            <person name="Koehrer K."/>
            <person name="Ottenwaelder B."/>
            <person name="Poustka A."/>
            <person name="Wiemann S."/>
            <person name="Schupp I."/>
        </authorList>
    </citation>
    <scope>NUCLEOTIDE SEQUENCE [LARGE SCALE MRNA] (ISOFORM 1)</scope>
    <source>
        <tissue>Testis</tissue>
    </source>
</reference>
<reference key="4">
    <citation type="journal article" date="2006" name="Nature">
        <title>DNA sequence of human chromosome 17 and analysis of rearrangement in the human lineage.</title>
        <authorList>
            <person name="Zody M.C."/>
            <person name="Garber M."/>
            <person name="Adams D.J."/>
            <person name="Sharpe T."/>
            <person name="Harrow J."/>
            <person name="Lupski J.R."/>
            <person name="Nicholson C."/>
            <person name="Searle S.M."/>
            <person name="Wilming L."/>
            <person name="Young S.K."/>
            <person name="Abouelleil A."/>
            <person name="Allen N.R."/>
            <person name="Bi W."/>
            <person name="Bloom T."/>
            <person name="Borowsky M.L."/>
            <person name="Bugalter B.E."/>
            <person name="Butler J."/>
            <person name="Chang J.L."/>
            <person name="Chen C.-K."/>
            <person name="Cook A."/>
            <person name="Corum B."/>
            <person name="Cuomo C.A."/>
            <person name="de Jong P.J."/>
            <person name="DeCaprio D."/>
            <person name="Dewar K."/>
            <person name="FitzGerald M."/>
            <person name="Gilbert J."/>
            <person name="Gibson R."/>
            <person name="Gnerre S."/>
            <person name="Goldstein S."/>
            <person name="Grafham D.V."/>
            <person name="Grocock R."/>
            <person name="Hafez N."/>
            <person name="Hagopian D.S."/>
            <person name="Hart E."/>
            <person name="Norman C.H."/>
            <person name="Humphray S."/>
            <person name="Jaffe D.B."/>
            <person name="Jones M."/>
            <person name="Kamal M."/>
            <person name="Khodiyar V.K."/>
            <person name="LaButti K."/>
            <person name="Laird G."/>
            <person name="Lehoczky J."/>
            <person name="Liu X."/>
            <person name="Lokyitsang T."/>
            <person name="Loveland J."/>
            <person name="Lui A."/>
            <person name="Macdonald P."/>
            <person name="Major J.E."/>
            <person name="Matthews L."/>
            <person name="Mauceli E."/>
            <person name="McCarroll S.A."/>
            <person name="Mihalev A.H."/>
            <person name="Mudge J."/>
            <person name="Nguyen C."/>
            <person name="Nicol R."/>
            <person name="O'Leary S.B."/>
            <person name="Osoegawa K."/>
            <person name="Schwartz D.C."/>
            <person name="Shaw-Smith C."/>
            <person name="Stankiewicz P."/>
            <person name="Steward C."/>
            <person name="Swarbreck D."/>
            <person name="Venkataraman V."/>
            <person name="Whittaker C.A."/>
            <person name="Yang X."/>
            <person name="Zimmer A.R."/>
            <person name="Bradley A."/>
            <person name="Hubbard T."/>
            <person name="Birren B.W."/>
            <person name="Rogers J."/>
            <person name="Lander E.S."/>
            <person name="Nusbaum C."/>
        </authorList>
    </citation>
    <scope>NUCLEOTIDE SEQUENCE [LARGE SCALE GENOMIC DNA]</scope>
</reference>
<reference key="5">
    <citation type="submission" date="2005-09" db="EMBL/GenBank/DDBJ databases">
        <authorList>
            <person name="Mural R.J."/>
            <person name="Istrail S."/>
            <person name="Sutton G.G."/>
            <person name="Florea L."/>
            <person name="Halpern A.L."/>
            <person name="Mobarry C.M."/>
            <person name="Lippert R."/>
            <person name="Walenz B."/>
            <person name="Shatkay H."/>
            <person name="Dew I."/>
            <person name="Miller J.R."/>
            <person name="Flanigan M.J."/>
            <person name="Edwards N.J."/>
            <person name="Bolanos R."/>
            <person name="Fasulo D."/>
            <person name="Halldorsson B.V."/>
            <person name="Hannenhalli S."/>
            <person name="Turner R."/>
            <person name="Yooseph S."/>
            <person name="Lu F."/>
            <person name="Nusskern D.R."/>
            <person name="Shue B.C."/>
            <person name="Zheng X.H."/>
            <person name="Zhong F."/>
            <person name="Delcher A.L."/>
            <person name="Huson D.H."/>
            <person name="Kravitz S.A."/>
            <person name="Mouchard L."/>
            <person name="Reinert K."/>
            <person name="Remington K.A."/>
            <person name="Clark A.G."/>
            <person name="Waterman M.S."/>
            <person name="Eichler E.E."/>
            <person name="Adams M.D."/>
            <person name="Hunkapiller M.W."/>
            <person name="Myers E.W."/>
            <person name="Venter J.C."/>
        </authorList>
    </citation>
    <scope>NUCLEOTIDE SEQUENCE [LARGE SCALE GENOMIC DNA]</scope>
</reference>
<reference key="6">
    <citation type="journal article" date="2004" name="Genome Res.">
        <title>The status, quality, and expansion of the NIH full-length cDNA project: the Mammalian Gene Collection (MGC).</title>
        <authorList>
            <consortium name="The MGC Project Team"/>
        </authorList>
    </citation>
    <scope>NUCLEOTIDE SEQUENCE [LARGE SCALE MRNA] OF 265-991 (ISOFORM 1)</scope>
    <scope>NUCLEOTIDE SEQUENCE [LARGE SCALE MRNA] OF 5-991 (ISOFORM 3)</scope>
    <source>
        <tissue>Brain</tissue>
        <tissue>Colon</tissue>
    </source>
</reference>
<reference key="7">
    <citation type="journal article" date="2008" name="Proc. Natl. Acad. Sci. U.S.A.">
        <title>A quantitative atlas of mitotic phosphorylation.</title>
        <authorList>
            <person name="Dephoure N."/>
            <person name="Zhou C."/>
            <person name="Villen J."/>
            <person name="Beausoleil S.A."/>
            <person name="Bakalarski C.E."/>
            <person name="Elledge S.J."/>
            <person name="Gygi S.P."/>
        </authorList>
    </citation>
    <scope>PHOSPHORYLATION [LARGE SCALE ANALYSIS] AT SER-469</scope>
    <scope>IDENTIFICATION BY MASS SPECTROMETRY [LARGE SCALE ANALYSIS]</scope>
    <source>
        <tissue>Cervix carcinoma</tissue>
    </source>
</reference>
<reference key="8">
    <citation type="journal article" date="2009" name="Genes Dev.">
        <title>SMG-8 and SMG-9, two novel subunits of the SMG-1 complex, regulate remodeling of the mRNA surveillance complex during nonsense-mediated mRNA decay.</title>
        <authorList>
            <person name="Yamashita A."/>
            <person name="Izumi N."/>
            <person name="Kashima I."/>
            <person name="Ohnishi T."/>
            <person name="Saari B."/>
            <person name="Katsuhata Y."/>
            <person name="Muramatsu R."/>
            <person name="Morita T."/>
            <person name="Iwamatsu A."/>
            <person name="Hachiya T."/>
            <person name="Kurata R."/>
            <person name="Hirano H."/>
            <person name="Anderson P."/>
            <person name="Ohno S."/>
        </authorList>
    </citation>
    <scope>FUNCTION</scope>
    <scope>PHOSPHORYLATION</scope>
    <scope>IDENTIFICATION BY MASS SPECTROMETRY</scope>
    <scope>IDENTIFICATION IN THE SMG1C COMPLEX</scope>
</reference>
<reference key="9">
    <citation type="journal article" date="2010" name="Sci. Signal.">
        <title>Quantitative phosphoproteomics reveals widespread full phosphorylation site occupancy during mitosis.</title>
        <authorList>
            <person name="Olsen J.V."/>
            <person name="Vermeulen M."/>
            <person name="Santamaria A."/>
            <person name="Kumar C."/>
            <person name="Miller M.L."/>
            <person name="Jensen L.J."/>
            <person name="Gnad F."/>
            <person name="Cox J."/>
            <person name="Jensen T.S."/>
            <person name="Nigg E.A."/>
            <person name="Brunak S."/>
            <person name="Mann M."/>
        </authorList>
    </citation>
    <scope>IDENTIFICATION BY MASS SPECTROMETRY [LARGE SCALE ANALYSIS]</scope>
    <source>
        <tissue>Cervix carcinoma</tissue>
    </source>
</reference>
<reference key="10">
    <citation type="journal article" date="2011" name="BMC Syst. Biol.">
        <title>Initial characterization of the human central proteome.</title>
        <authorList>
            <person name="Burkard T.R."/>
            <person name="Planyavsky M."/>
            <person name="Kaupe I."/>
            <person name="Breitwieser F.P."/>
            <person name="Buerckstuemmer T."/>
            <person name="Bennett K.L."/>
            <person name="Superti-Furga G."/>
            <person name="Colinge J."/>
        </authorList>
    </citation>
    <scope>IDENTIFICATION BY MASS SPECTROMETRY [LARGE SCALE ANALYSIS]</scope>
</reference>
<reference key="11">
    <citation type="journal article" date="2011" name="Genes Dev.">
        <title>The nonsense-mediated mRNA decay SMG-1 kinase is regulated by large-scale conformational changes controlled by SMG-8.</title>
        <authorList>
            <person name="Arias-Palomo E."/>
            <person name="Yamashita A."/>
            <person name="Fernandez I.S."/>
            <person name="Nunez-Ramirez R."/>
            <person name="Bamba Y."/>
            <person name="Izumi N."/>
            <person name="Ohno S."/>
            <person name="Llorca O."/>
        </authorList>
    </citation>
    <scope>INTERACTION WITH SMG1 AND SMG9</scope>
    <scope>ELECTRON MICROSCOPY OF THE SMG1C COMPLEX</scope>
</reference>
<reference key="12">
    <citation type="journal article" date="2011" name="Nucleic Acids Res.">
        <title>Characterization of SMG-9, an essential component of the nonsense-mediated mRNA decay SMG1C complex.</title>
        <authorList>
            <person name="Fernandez I.S."/>
            <person name="Yamashita A."/>
            <person name="Arias-Palomo E."/>
            <person name="Bamba Y."/>
            <person name="Bartolome R.A."/>
            <person name="Canales M.A."/>
            <person name="Teixido J."/>
            <person name="Ohno S."/>
            <person name="Llorca O."/>
        </authorList>
    </citation>
    <scope>SUBUNIT</scope>
</reference>
<reference key="13">
    <citation type="journal article" date="2011" name="Sci. Signal.">
        <title>System-wide temporal characterization of the proteome and phosphoproteome of human embryonic stem cell differentiation.</title>
        <authorList>
            <person name="Rigbolt K.T."/>
            <person name="Prokhorova T.A."/>
            <person name="Akimov V."/>
            <person name="Henningsen J."/>
            <person name="Johansen P.T."/>
            <person name="Kratchmarova I."/>
            <person name="Kassem M."/>
            <person name="Mann M."/>
            <person name="Olsen J.V."/>
            <person name="Blagoev B."/>
        </authorList>
    </citation>
    <scope>PHOSPHORYLATION [LARGE SCALE ANALYSIS] AT SER-668</scope>
    <scope>IDENTIFICATION BY MASS SPECTROMETRY [LARGE SCALE ANALYSIS]</scope>
</reference>
<reference key="14">
    <citation type="journal article" date="2013" name="J. Proteome Res.">
        <title>Toward a comprehensive characterization of a human cancer cell phosphoproteome.</title>
        <authorList>
            <person name="Zhou H."/>
            <person name="Di Palma S."/>
            <person name="Preisinger C."/>
            <person name="Peng M."/>
            <person name="Polat A.N."/>
            <person name="Heck A.J."/>
            <person name="Mohammed S."/>
        </authorList>
    </citation>
    <scope>PHOSPHORYLATION [LARGE SCALE ANALYSIS] AT SER-115; SER-668; SER-742 AND SER-895</scope>
    <scope>IDENTIFICATION BY MASS SPECTROMETRY [LARGE SCALE ANALYSIS]</scope>
    <source>
        <tissue>Cervix carcinoma</tissue>
        <tissue>Erythroleukemia</tissue>
    </source>
</reference>
<reference key="15">
    <citation type="journal article" date="2014" name="J. Proteomics">
        <title>An enzyme assisted RP-RPLC approach for in-depth analysis of human liver phosphoproteome.</title>
        <authorList>
            <person name="Bian Y."/>
            <person name="Song C."/>
            <person name="Cheng K."/>
            <person name="Dong M."/>
            <person name="Wang F."/>
            <person name="Huang J."/>
            <person name="Sun D."/>
            <person name="Wang L."/>
            <person name="Ye M."/>
            <person name="Zou H."/>
        </authorList>
    </citation>
    <scope>IDENTIFICATION BY MASS SPECTROMETRY [LARGE SCALE ANALYSIS]</scope>
    <source>
        <tissue>Liver</tissue>
    </source>
</reference>
<reference key="16">
    <citation type="journal article" date="2014" name="Mol. Cell. Proteomics">
        <title>Immunoaffinity enrichment and mass spectrometry analysis of protein methylation.</title>
        <authorList>
            <person name="Guo A."/>
            <person name="Gu H."/>
            <person name="Zhou J."/>
            <person name="Mulhern D."/>
            <person name="Wang Y."/>
            <person name="Lee K.A."/>
            <person name="Yang V."/>
            <person name="Aguiar M."/>
            <person name="Kornhauser J."/>
            <person name="Jia X."/>
            <person name="Ren J."/>
            <person name="Beausoleil S.A."/>
            <person name="Silva J.C."/>
            <person name="Vemulapalli V."/>
            <person name="Bedford M.T."/>
            <person name="Comb M.J."/>
        </authorList>
    </citation>
    <scope>METHYLATION [LARGE SCALE ANALYSIS] AT ARG-898</scope>
    <scope>IDENTIFICATION BY MASS SPECTROMETRY [LARGE SCALE ANALYSIS]</scope>
    <source>
        <tissue>Colon carcinoma</tissue>
    </source>
</reference>
<reference key="17">
    <citation type="journal article" date="2020" name="Elife">
        <title>Regulation of RUVBL1-RUVBL2 AAA-ATPases by the nonsense-mediated mRNA decay factor DHX34, as evidenced by Cryo-EM.</title>
        <authorList>
            <person name="Lopez-Perrote A."/>
            <person name="Hug N."/>
            <person name="Gonzalez-Corpas A."/>
            <person name="Rodriguez C.F."/>
            <person name="Serna M."/>
            <person name="Garcia-Martin C."/>
            <person name="Boskovic J."/>
            <person name="Fernandez-Leiro R."/>
            <person name="Caceres J.F."/>
            <person name="Llorca O."/>
        </authorList>
    </citation>
    <scope>INTERACTION WITH SMG1</scope>
</reference>
<reference key="18">
    <citation type="journal article" date="2020" name="Am. J. Hum. Genet.">
        <title>Recessive, deleterious variants in SMG8 expand the role of nonsense-mediated decay in developmental disorders in humans.</title>
        <authorList>
            <person name="Alzahrani F."/>
            <person name="Kuwahara H."/>
            <person name="Long Y."/>
            <person name="Al-Owain M."/>
            <person name="Tohary M."/>
            <person name="AlSayed M."/>
            <person name="Mahnashi M."/>
            <person name="Fathi L."/>
            <person name="Alnemer M."/>
            <person name="Al-Hamed M.H."/>
            <person name="Lemire G."/>
            <person name="Boycott K.M."/>
            <person name="Hashem M."/>
            <person name="Han W."/>
            <person name="Al-Maawali A."/>
            <person name="Al Mahrizi F."/>
            <person name="Al-Thihli K."/>
            <person name="Gao X."/>
            <person name="Alkuraya F.S."/>
        </authorList>
    </citation>
    <scope>VARIANTS ALKUS ARG-208 AND 839-ARG--GLN-991 DEL</scope>
    <scope>INVOLVEMENT IN ALKUS</scope>
</reference>
<accession>Q8ND04</accession>
<accession>Q8N5U5</accession>
<accession>Q8TDN0</accession>
<accession>Q9H5P5</accession>
<accession>Q9NVQ1</accession>